<protein>
    <recommendedName>
        <fullName evidence="1">Phosphoenolpyruvate carboxykinase (ATP)</fullName>
        <shortName evidence="1">PCK</shortName>
        <shortName evidence="1">PEP carboxykinase</shortName>
        <shortName evidence="1">PEPCK</shortName>
        <ecNumber evidence="1">4.1.1.49</ecNumber>
    </recommendedName>
</protein>
<name>PCKA_BRUME</name>
<accession>Q8YE41</accession>
<comment type="function">
    <text evidence="1">Involved in the gluconeogenesis. Catalyzes the conversion of oxaloacetate (OAA) to phosphoenolpyruvate (PEP) through direct phosphoryl transfer between the nucleoside triphosphate and OAA.</text>
</comment>
<comment type="catalytic activity">
    <reaction evidence="1">
        <text>oxaloacetate + ATP = phosphoenolpyruvate + ADP + CO2</text>
        <dbReference type="Rhea" id="RHEA:18617"/>
        <dbReference type="ChEBI" id="CHEBI:16452"/>
        <dbReference type="ChEBI" id="CHEBI:16526"/>
        <dbReference type="ChEBI" id="CHEBI:30616"/>
        <dbReference type="ChEBI" id="CHEBI:58702"/>
        <dbReference type="ChEBI" id="CHEBI:456216"/>
        <dbReference type="EC" id="4.1.1.49"/>
    </reaction>
</comment>
<comment type="cofactor">
    <cofactor evidence="1">
        <name>Mn(2+)</name>
        <dbReference type="ChEBI" id="CHEBI:29035"/>
    </cofactor>
    <text evidence="1">Binds 1 Mn(2+) ion per subunit.</text>
</comment>
<comment type="pathway">
    <text evidence="1">Carbohydrate biosynthesis; gluconeogenesis.</text>
</comment>
<comment type="subcellular location">
    <subcellularLocation>
        <location evidence="1">Cytoplasm</location>
    </subcellularLocation>
</comment>
<comment type="similarity">
    <text evidence="1">Belongs to the phosphoenolpyruvate carboxykinase (ATP) family.</text>
</comment>
<comment type="sequence caution" evidence="2">
    <conflict type="erroneous termination">
        <sequence resource="EMBL-CDS" id="AAL53218"/>
    </conflict>
    <text>Truncated C-terminus.</text>
</comment>
<evidence type="ECO:0000255" key="1">
    <source>
        <dbReference type="HAMAP-Rule" id="MF_00453"/>
    </source>
</evidence>
<evidence type="ECO:0000305" key="2"/>
<keyword id="KW-0067">ATP-binding</keyword>
<keyword id="KW-0963">Cytoplasm</keyword>
<keyword id="KW-0210">Decarboxylase</keyword>
<keyword id="KW-0312">Gluconeogenesis</keyword>
<keyword id="KW-0456">Lyase</keyword>
<keyword id="KW-0464">Manganese</keyword>
<keyword id="KW-0479">Metal-binding</keyword>
<keyword id="KW-0547">Nucleotide-binding</keyword>
<organism>
    <name type="scientific">Brucella melitensis biotype 1 (strain ATCC 23456 / CCUG 17765 / NCTC 10094 / 16M)</name>
    <dbReference type="NCBI Taxonomy" id="224914"/>
    <lineage>
        <taxon>Bacteria</taxon>
        <taxon>Pseudomonadati</taxon>
        <taxon>Pseudomonadota</taxon>
        <taxon>Alphaproteobacteria</taxon>
        <taxon>Hyphomicrobiales</taxon>
        <taxon>Brucellaceae</taxon>
        <taxon>Brucella/Ochrobactrum group</taxon>
        <taxon>Brucella</taxon>
    </lineage>
</organism>
<dbReference type="EC" id="4.1.1.49" evidence="1"/>
<dbReference type="EMBL" id="AE008917">
    <property type="protein sequence ID" value="AAL53218.1"/>
    <property type="status" value="ALT_SEQ"/>
    <property type="molecule type" value="Genomic_DNA"/>
</dbReference>
<dbReference type="PIR" id="AG3506">
    <property type="entry name" value="AG3506"/>
</dbReference>
<dbReference type="SMR" id="Q8YE41"/>
<dbReference type="KEGG" id="bme:BMEI2037"/>
<dbReference type="eggNOG" id="COG1866">
    <property type="taxonomic scope" value="Bacteria"/>
</dbReference>
<dbReference type="UniPathway" id="UPA00138"/>
<dbReference type="Proteomes" id="UP000000419">
    <property type="component" value="Chromosome I"/>
</dbReference>
<dbReference type="GO" id="GO:0005829">
    <property type="term" value="C:cytosol"/>
    <property type="evidence" value="ECO:0007669"/>
    <property type="project" value="TreeGrafter"/>
</dbReference>
<dbReference type="GO" id="GO:0005524">
    <property type="term" value="F:ATP binding"/>
    <property type="evidence" value="ECO:0007669"/>
    <property type="project" value="UniProtKB-UniRule"/>
</dbReference>
<dbReference type="GO" id="GO:0046872">
    <property type="term" value="F:metal ion binding"/>
    <property type="evidence" value="ECO:0007669"/>
    <property type="project" value="UniProtKB-KW"/>
</dbReference>
<dbReference type="GO" id="GO:0004612">
    <property type="term" value="F:phosphoenolpyruvate carboxykinase (ATP) activity"/>
    <property type="evidence" value="ECO:0007669"/>
    <property type="project" value="UniProtKB-UniRule"/>
</dbReference>
<dbReference type="GO" id="GO:0006094">
    <property type="term" value="P:gluconeogenesis"/>
    <property type="evidence" value="ECO:0007669"/>
    <property type="project" value="UniProtKB-UniRule"/>
</dbReference>
<dbReference type="CDD" id="cd00484">
    <property type="entry name" value="PEPCK_ATP"/>
    <property type="match status" value="1"/>
</dbReference>
<dbReference type="Gene3D" id="3.90.228.20">
    <property type="match status" value="1"/>
</dbReference>
<dbReference type="Gene3D" id="3.40.449.10">
    <property type="entry name" value="Phosphoenolpyruvate Carboxykinase, domain 1"/>
    <property type="match status" value="1"/>
</dbReference>
<dbReference type="Gene3D" id="2.170.8.10">
    <property type="entry name" value="Phosphoenolpyruvate Carboxykinase, domain 2"/>
    <property type="match status" value="1"/>
</dbReference>
<dbReference type="HAMAP" id="MF_00453">
    <property type="entry name" value="PEPCK_ATP"/>
    <property type="match status" value="1"/>
</dbReference>
<dbReference type="InterPro" id="IPR001272">
    <property type="entry name" value="PEP_carboxykinase_ATP"/>
</dbReference>
<dbReference type="InterPro" id="IPR013035">
    <property type="entry name" value="PEP_carboxykinase_C"/>
</dbReference>
<dbReference type="InterPro" id="IPR008210">
    <property type="entry name" value="PEP_carboxykinase_N"/>
</dbReference>
<dbReference type="InterPro" id="IPR015994">
    <property type="entry name" value="PEPCK_ATP_CS"/>
</dbReference>
<dbReference type="NCBIfam" id="TIGR00224">
    <property type="entry name" value="pckA"/>
    <property type="match status" value="1"/>
</dbReference>
<dbReference type="NCBIfam" id="NF006820">
    <property type="entry name" value="PRK09344.1-2"/>
    <property type="match status" value="1"/>
</dbReference>
<dbReference type="NCBIfam" id="NF006821">
    <property type="entry name" value="PRK09344.1-3"/>
    <property type="match status" value="1"/>
</dbReference>
<dbReference type="NCBIfam" id="NF006822">
    <property type="entry name" value="PRK09344.1-4"/>
    <property type="match status" value="1"/>
</dbReference>
<dbReference type="PANTHER" id="PTHR30031:SF0">
    <property type="entry name" value="PHOSPHOENOLPYRUVATE CARBOXYKINASE (ATP)"/>
    <property type="match status" value="1"/>
</dbReference>
<dbReference type="PANTHER" id="PTHR30031">
    <property type="entry name" value="PHOSPHOENOLPYRUVATE CARBOXYKINASE ATP"/>
    <property type="match status" value="1"/>
</dbReference>
<dbReference type="Pfam" id="PF01293">
    <property type="entry name" value="PEPCK_ATP"/>
    <property type="match status" value="1"/>
</dbReference>
<dbReference type="PIRSF" id="PIRSF006294">
    <property type="entry name" value="PEP_crbxkin"/>
    <property type="match status" value="1"/>
</dbReference>
<dbReference type="SUPFAM" id="SSF68923">
    <property type="entry name" value="PEP carboxykinase N-terminal domain"/>
    <property type="match status" value="1"/>
</dbReference>
<dbReference type="SUPFAM" id="SSF53795">
    <property type="entry name" value="PEP carboxykinase-like"/>
    <property type="match status" value="1"/>
</dbReference>
<dbReference type="PROSITE" id="PS00532">
    <property type="entry name" value="PEPCK_ATP"/>
    <property type="match status" value="1"/>
</dbReference>
<reference key="1">
    <citation type="journal article" date="2002" name="Proc. Natl. Acad. Sci. U.S.A.">
        <title>The genome sequence of the facultative intracellular pathogen Brucella melitensis.</title>
        <authorList>
            <person name="DelVecchio V.G."/>
            <person name="Kapatral V."/>
            <person name="Redkar R.J."/>
            <person name="Patra G."/>
            <person name="Mujer C."/>
            <person name="Los T."/>
            <person name="Ivanova N."/>
            <person name="Anderson I."/>
            <person name="Bhattacharyya A."/>
            <person name="Lykidis A."/>
            <person name="Reznik G."/>
            <person name="Jablonski L."/>
            <person name="Larsen N."/>
            <person name="D'Souza M."/>
            <person name="Bernal A."/>
            <person name="Mazur M."/>
            <person name="Goltsman E."/>
            <person name="Selkov E."/>
            <person name="Elzer P.H."/>
            <person name="Hagius S."/>
            <person name="O'Callaghan D."/>
            <person name="Letesson J.-J."/>
            <person name="Haselkorn R."/>
            <person name="Kyrpides N.C."/>
            <person name="Overbeek R."/>
        </authorList>
    </citation>
    <scope>NUCLEOTIDE SEQUENCE [LARGE SCALE GENOMIC DNA]</scope>
    <source>
        <strain>ATCC 23456 / CCUG 17765 / NCTC 10094 / 16M</strain>
    </source>
</reference>
<sequence>MKETGIHNKAASISTSGLKELSAVFYNLGPARLYEETIRRGEAELSAQGALVARTGQHTGRSPKDKFVVRDANTEDHVWWDNNKPMTPEAFELLYADFIEHAKGRELFVQDLIGGADADNKINARVITEYAWHSLFIRNLLIRPSQEALASYVPEMTIIDLPSFKADPERYGVRTETVIAVDLTRKIVLIGGTSYAGEMKKSVFTALNYILPAKGVMPMHCSANEGPNGDTAVFFGLSGTGKTTLSADPTRTLIGDDEHGWGEHGVFNFEGGCYAKTIRLSAEAEPEIYATTQRFGTVLENVVLDENRQPDFDDGSLTENTRCAYPLDFIPNASKSGKGGQPKNIIMLTADAFGVMPPIAKLTPAQAMYHFLSGYTAKVAATEKGVTEPEATFSTCFGAPFMPRHPSEYGNLLRKLIAEHKVDCWLVNTGWTGGAYGVGKRMPIKATRALLAAALDGSLNNAEFRIDPNFGFAVPVEVPGVESSILDPRSTWADKVAYDAQAKKLVDMFVSNFEKFESHVDHEVKDAAPAIRMAAE</sequence>
<gene>
    <name evidence="1" type="primary">pckA</name>
    <name type="ordered locus">BMEI2037</name>
</gene>
<proteinExistence type="inferred from homology"/>
<feature type="chain" id="PRO_0000203813" description="Phosphoenolpyruvate carboxykinase (ATP)">
    <location>
        <begin position="1"/>
        <end position="536"/>
    </location>
</feature>
<feature type="binding site" evidence="1">
    <location>
        <position position="61"/>
    </location>
    <ligand>
        <name>substrate</name>
    </ligand>
</feature>
<feature type="binding site" evidence="1">
    <location>
        <position position="195"/>
    </location>
    <ligand>
        <name>substrate</name>
    </ligand>
</feature>
<feature type="binding site" evidence="1">
    <location>
        <position position="201"/>
    </location>
    <ligand>
        <name>ATP</name>
        <dbReference type="ChEBI" id="CHEBI:30616"/>
    </ligand>
</feature>
<feature type="binding site" evidence="1">
    <location>
        <position position="201"/>
    </location>
    <ligand>
        <name>Mn(2+)</name>
        <dbReference type="ChEBI" id="CHEBI:29035"/>
    </ligand>
</feature>
<feature type="binding site" evidence="1">
    <location>
        <position position="201"/>
    </location>
    <ligand>
        <name>substrate</name>
    </ligand>
</feature>
<feature type="binding site" evidence="1">
    <location>
        <position position="220"/>
    </location>
    <ligand>
        <name>ATP</name>
        <dbReference type="ChEBI" id="CHEBI:30616"/>
    </ligand>
</feature>
<feature type="binding site" evidence="1">
    <location>
        <position position="220"/>
    </location>
    <ligand>
        <name>Mn(2+)</name>
        <dbReference type="ChEBI" id="CHEBI:29035"/>
    </ligand>
</feature>
<feature type="binding site" evidence="1">
    <location>
        <begin position="236"/>
        <end position="244"/>
    </location>
    <ligand>
        <name>ATP</name>
        <dbReference type="ChEBI" id="CHEBI:30616"/>
    </ligand>
</feature>
<feature type="binding site" evidence="1">
    <location>
        <position position="257"/>
    </location>
    <ligand>
        <name>Mn(2+)</name>
        <dbReference type="ChEBI" id="CHEBI:29035"/>
    </ligand>
</feature>
<feature type="binding site" evidence="1">
    <location>
        <position position="285"/>
    </location>
    <ligand>
        <name>ATP</name>
        <dbReference type="ChEBI" id="CHEBI:30616"/>
    </ligand>
</feature>
<feature type="binding site" evidence="1">
    <location>
        <position position="322"/>
    </location>
    <ligand>
        <name>ATP</name>
        <dbReference type="ChEBI" id="CHEBI:30616"/>
    </ligand>
</feature>
<feature type="binding site" evidence="1">
    <location>
        <position position="322"/>
    </location>
    <ligand>
        <name>substrate</name>
    </ligand>
</feature>
<feature type="binding site" evidence="1">
    <location>
        <position position="447"/>
    </location>
    <ligand>
        <name>ATP</name>
        <dbReference type="ChEBI" id="CHEBI:30616"/>
    </ligand>
</feature>